<dbReference type="EC" id="7.1.1.2"/>
<dbReference type="EMBL" id="AB011215">
    <property type="protein sequence ID" value="BAA32107.1"/>
    <property type="molecule type" value="Genomic_DNA"/>
</dbReference>
<dbReference type="SMR" id="O78698"/>
<dbReference type="GO" id="GO:0005743">
    <property type="term" value="C:mitochondrial inner membrane"/>
    <property type="evidence" value="ECO:0007669"/>
    <property type="project" value="UniProtKB-SubCell"/>
</dbReference>
<dbReference type="GO" id="GO:0008137">
    <property type="term" value="F:NADH dehydrogenase (ubiquinone) activity"/>
    <property type="evidence" value="ECO:0007669"/>
    <property type="project" value="UniProtKB-EC"/>
</dbReference>
<dbReference type="GO" id="GO:0009060">
    <property type="term" value="P:aerobic respiration"/>
    <property type="evidence" value="ECO:0007669"/>
    <property type="project" value="TreeGrafter"/>
</dbReference>
<dbReference type="HAMAP" id="MF_01350">
    <property type="entry name" value="NDH1_NuoH"/>
    <property type="match status" value="1"/>
</dbReference>
<dbReference type="InterPro" id="IPR001694">
    <property type="entry name" value="NADH_UbQ_OxRdtase_su1/FPO"/>
</dbReference>
<dbReference type="InterPro" id="IPR018086">
    <property type="entry name" value="NADH_UbQ_OxRdtase_su1_CS"/>
</dbReference>
<dbReference type="PANTHER" id="PTHR11432">
    <property type="entry name" value="NADH DEHYDROGENASE SUBUNIT 1"/>
    <property type="match status" value="1"/>
</dbReference>
<dbReference type="PANTHER" id="PTHR11432:SF3">
    <property type="entry name" value="NADH-UBIQUINONE OXIDOREDUCTASE CHAIN 1"/>
    <property type="match status" value="1"/>
</dbReference>
<dbReference type="Pfam" id="PF00146">
    <property type="entry name" value="NADHdh"/>
    <property type="match status" value="1"/>
</dbReference>
<dbReference type="PROSITE" id="PS00667">
    <property type="entry name" value="COMPLEX1_ND1_1"/>
    <property type="match status" value="1"/>
</dbReference>
<dbReference type="PROSITE" id="PS00668">
    <property type="entry name" value="COMPLEX1_ND1_2"/>
    <property type="match status" value="1"/>
</dbReference>
<comment type="function">
    <text evidence="1">Core subunit of the mitochondrial membrane respiratory chain NADH dehydrogenase (Complex I) that is believed to belong to the minimal assembly required for catalysis. Complex I functions in the transfer of electrons from NADH to the respiratory chain. The immediate electron acceptor for the enzyme is believed to be ubiquinone (By similarity).</text>
</comment>
<comment type="catalytic activity">
    <reaction>
        <text>a ubiquinone + NADH + 5 H(+)(in) = a ubiquinol + NAD(+) + 4 H(+)(out)</text>
        <dbReference type="Rhea" id="RHEA:29091"/>
        <dbReference type="Rhea" id="RHEA-COMP:9565"/>
        <dbReference type="Rhea" id="RHEA-COMP:9566"/>
        <dbReference type="ChEBI" id="CHEBI:15378"/>
        <dbReference type="ChEBI" id="CHEBI:16389"/>
        <dbReference type="ChEBI" id="CHEBI:17976"/>
        <dbReference type="ChEBI" id="CHEBI:57540"/>
        <dbReference type="ChEBI" id="CHEBI:57945"/>
        <dbReference type="EC" id="7.1.1.2"/>
    </reaction>
</comment>
<comment type="subcellular location">
    <subcellularLocation>
        <location evidence="1">Mitochondrion inner membrane</location>
        <topology evidence="1">Multi-pass membrane protein</topology>
    </subcellularLocation>
</comment>
<comment type="similarity">
    <text evidence="3">Belongs to the complex I subunit 1 family.</text>
</comment>
<proteinExistence type="inferred from homology"/>
<protein>
    <recommendedName>
        <fullName>NADH-ubiquinone oxidoreductase chain 1</fullName>
        <ecNumber>7.1.1.2</ecNumber>
    </recommendedName>
    <alternativeName>
        <fullName>NADH dehydrogenase subunit 1</fullName>
    </alternativeName>
</protein>
<sequence length="318" mass="35811">MFLMNLLLLIIPILVAMAFLTLVERKMLGYMQLRKGPNIVGPYGLLQPFADAMKLFIKEPLKPLTSSISLFIIAPSLALTLAFTMWIPLPMPQPLINMNMGILFILATSSLAVYTILWSGWASNSKYALFGALRAVAQTISYEVTLAIILLSVLLLNGSFTLSSLITTQQFTWLLLPTWPLAMMWFISTLAETNRAPFDLTEGESELVSGFNVEYAAGPFALFFMAEYTNIIMMNALTTTIFMGALLNPLNPEMFTFSFTLKTLMLTATFLWIRASYPRFRYDQLMHLLWKNFLPLTLALCMWHISLPVIMACIPPLT</sequence>
<keyword id="KW-0249">Electron transport</keyword>
<keyword id="KW-0472">Membrane</keyword>
<keyword id="KW-0496">Mitochondrion</keyword>
<keyword id="KW-0999">Mitochondrion inner membrane</keyword>
<keyword id="KW-0520">NAD</keyword>
<keyword id="KW-0679">Respiratory chain</keyword>
<keyword id="KW-1278">Translocase</keyword>
<keyword id="KW-0812">Transmembrane</keyword>
<keyword id="KW-1133">Transmembrane helix</keyword>
<keyword id="KW-0813">Transport</keyword>
<keyword id="KW-0830">Ubiquinone</keyword>
<geneLocation type="mitochondrion"/>
<feature type="chain" id="PRO_0000117485" description="NADH-ubiquinone oxidoreductase chain 1">
    <location>
        <begin position="1"/>
        <end position="318"/>
    </location>
</feature>
<feature type="transmembrane region" description="Helical" evidence="2">
    <location>
        <begin position="2"/>
        <end position="22"/>
    </location>
</feature>
<feature type="transmembrane region" description="Helical" evidence="2">
    <location>
        <begin position="68"/>
        <end position="88"/>
    </location>
</feature>
<feature type="transmembrane region" description="Helical" evidence="2">
    <location>
        <begin position="102"/>
        <end position="122"/>
    </location>
</feature>
<feature type="transmembrane region" description="Helical" evidence="2">
    <location>
        <begin position="146"/>
        <end position="166"/>
    </location>
</feature>
<feature type="transmembrane region" description="Helical" evidence="2">
    <location>
        <begin position="171"/>
        <end position="191"/>
    </location>
</feature>
<feature type="transmembrane region" description="Helical" evidence="2">
    <location>
        <begin position="217"/>
        <end position="237"/>
    </location>
</feature>
<feature type="transmembrane region" description="Helical" evidence="2">
    <location>
        <begin position="253"/>
        <end position="273"/>
    </location>
</feature>
<feature type="transmembrane region" description="Helical" evidence="2">
    <location>
        <begin position="294"/>
        <end position="314"/>
    </location>
</feature>
<accession>O78698</accession>
<name>NU1M_TAMSI</name>
<reference key="1">
    <citation type="journal article" date="1998" name="J. Mol. Evol.">
        <title>Conflict among individual mitochondrial proteins in resolving the phylogeny of eutherian orders.</title>
        <authorList>
            <person name="Cao Y."/>
            <person name="Janke A."/>
            <person name="Waddell P.J."/>
            <person name="Westerman M."/>
            <person name="Takenaka O."/>
            <person name="Murata S."/>
            <person name="Okada N."/>
            <person name="Paeaebo S."/>
            <person name="Hasegawa M."/>
        </authorList>
    </citation>
    <scope>NUCLEOTIDE SEQUENCE [GENOMIC DNA]</scope>
    <source>
        <tissue>Hair</tissue>
    </source>
</reference>
<gene>
    <name type="primary">MT-ND1</name>
    <name type="synonym">MTND1</name>
    <name type="synonym">NADH1</name>
    <name type="synonym">ND1</name>
</gene>
<evidence type="ECO:0000250" key="1"/>
<evidence type="ECO:0000255" key="2"/>
<evidence type="ECO:0000305" key="3"/>
<organism>
    <name type="scientific">Tamias sibiricus</name>
    <name type="common">Siberian chipmunk</name>
    <name type="synonym">Eutamias sibiricus</name>
    <dbReference type="NCBI Taxonomy" id="64680"/>
    <lineage>
        <taxon>Eukaryota</taxon>
        <taxon>Metazoa</taxon>
        <taxon>Chordata</taxon>
        <taxon>Craniata</taxon>
        <taxon>Vertebrata</taxon>
        <taxon>Euteleostomi</taxon>
        <taxon>Mammalia</taxon>
        <taxon>Eutheria</taxon>
        <taxon>Euarchontoglires</taxon>
        <taxon>Glires</taxon>
        <taxon>Rodentia</taxon>
        <taxon>Sciuromorpha</taxon>
        <taxon>Sciuridae</taxon>
        <taxon>Xerinae</taxon>
        <taxon>Marmotini</taxon>
        <taxon>Tamias</taxon>
    </lineage>
</organism>